<comment type="subunit">
    <text evidence="1">Part of the 50S ribosomal subunit. Contacts protein L32.</text>
</comment>
<comment type="similarity">
    <text evidence="1">Belongs to the bacterial ribosomal protein bL17 family.</text>
</comment>
<accession>C4XLK4</accession>
<feature type="chain" id="PRO_1000215003" description="Large ribosomal subunit protein bL17">
    <location>
        <begin position="1"/>
        <end position="138"/>
    </location>
</feature>
<protein>
    <recommendedName>
        <fullName evidence="1">Large ribosomal subunit protein bL17</fullName>
    </recommendedName>
    <alternativeName>
        <fullName evidence="2">50S ribosomal protein L17</fullName>
    </alternativeName>
</protein>
<sequence>MRHNKSGRKLGRTAAHRKAMLRNMARSLLIHERIRTTEHKAKELRGVVEQLVTLAQTDSVHARRMAYKVLENHQLVARLFNEIGPRFTGQPGGYTRVVKMSLPRAGDCAAMAIIELTKLAGAAPAGQEQAPKDASSEA</sequence>
<organism>
    <name type="scientific">Solidesulfovibrio magneticus (strain ATCC 700980 / DSM 13731 / RS-1)</name>
    <name type="common">Desulfovibrio magneticus</name>
    <dbReference type="NCBI Taxonomy" id="573370"/>
    <lineage>
        <taxon>Bacteria</taxon>
        <taxon>Pseudomonadati</taxon>
        <taxon>Thermodesulfobacteriota</taxon>
        <taxon>Desulfovibrionia</taxon>
        <taxon>Desulfovibrionales</taxon>
        <taxon>Desulfovibrionaceae</taxon>
        <taxon>Solidesulfovibrio</taxon>
    </lineage>
</organism>
<name>RL17_SOLM1</name>
<keyword id="KW-0687">Ribonucleoprotein</keyword>
<keyword id="KW-0689">Ribosomal protein</keyword>
<proteinExistence type="inferred from homology"/>
<gene>
    <name evidence="1" type="primary">rplQ</name>
    <name type="ordered locus">DMR_12470</name>
</gene>
<reference key="1">
    <citation type="journal article" date="2009" name="Genome Res.">
        <title>Whole genome sequence of Desulfovibrio magneticus strain RS-1 revealed common gene clusters in magnetotactic bacteria.</title>
        <authorList>
            <person name="Nakazawa H."/>
            <person name="Arakaki A."/>
            <person name="Narita-Yamada S."/>
            <person name="Yashiro I."/>
            <person name="Jinno K."/>
            <person name="Aoki N."/>
            <person name="Tsuruyama A."/>
            <person name="Okamura Y."/>
            <person name="Tanikawa S."/>
            <person name="Fujita N."/>
            <person name="Takeyama H."/>
            <person name="Matsunaga T."/>
        </authorList>
    </citation>
    <scope>NUCLEOTIDE SEQUENCE [LARGE SCALE GENOMIC DNA]</scope>
    <source>
        <strain>ATCC 700980 / DSM 13731 / RS-1</strain>
    </source>
</reference>
<evidence type="ECO:0000255" key="1">
    <source>
        <dbReference type="HAMAP-Rule" id="MF_01368"/>
    </source>
</evidence>
<evidence type="ECO:0000305" key="2"/>
<dbReference type="EMBL" id="AP010904">
    <property type="protein sequence ID" value="BAH74738.1"/>
    <property type="molecule type" value="Genomic_DNA"/>
</dbReference>
<dbReference type="RefSeq" id="WP_015859951.1">
    <property type="nucleotide sequence ID" value="NC_012796.1"/>
</dbReference>
<dbReference type="SMR" id="C4XLK4"/>
<dbReference type="STRING" id="573370.DMR_12470"/>
<dbReference type="KEGG" id="dma:DMR_12470"/>
<dbReference type="eggNOG" id="COG0203">
    <property type="taxonomic scope" value="Bacteria"/>
</dbReference>
<dbReference type="HOGENOM" id="CLU_074407_2_0_7"/>
<dbReference type="OrthoDB" id="9809073at2"/>
<dbReference type="Proteomes" id="UP000009071">
    <property type="component" value="Chromosome"/>
</dbReference>
<dbReference type="GO" id="GO:0022625">
    <property type="term" value="C:cytosolic large ribosomal subunit"/>
    <property type="evidence" value="ECO:0007669"/>
    <property type="project" value="TreeGrafter"/>
</dbReference>
<dbReference type="GO" id="GO:0003735">
    <property type="term" value="F:structural constituent of ribosome"/>
    <property type="evidence" value="ECO:0007669"/>
    <property type="project" value="InterPro"/>
</dbReference>
<dbReference type="GO" id="GO:0006412">
    <property type="term" value="P:translation"/>
    <property type="evidence" value="ECO:0007669"/>
    <property type="project" value="UniProtKB-UniRule"/>
</dbReference>
<dbReference type="FunFam" id="3.90.1030.10:FF:000001">
    <property type="entry name" value="50S ribosomal protein L17"/>
    <property type="match status" value="1"/>
</dbReference>
<dbReference type="Gene3D" id="3.90.1030.10">
    <property type="entry name" value="Ribosomal protein L17"/>
    <property type="match status" value="1"/>
</dbReference>
<dbReference type="HAMAP" id="MF_01368">
    <property type="entry name" value="Ribosomal_bL17"/>
    <property type="match status" value="1"/>
</dbReference>
<dbReference type="InterPro" id="IPR000456">
    <property type="entry name" value="Ribosomal_bL17"/>
</dbReference>
<dbReference type="InterPro" id="IPR036373">
    <property type="entry name" value="Ribosomal_bL17_sf"/>
</dbReference>
<dbReference type="NCBIfam" id="TIGR00059">
    <property type="entry name" value="L17"/>
    <property type="match status" value="1"/>
</dbReference>
<dbReference type="PANTHER" id="PTHR14413:SF16">
    <property type="entry name" value="LARGE RIBOSOMAL SUBUNIT PROTEIN BL17M"/>
    <property type="match status" value="1"/>
</dbReference>
<dbReference type="PANTHER" id="PTHR14413">
    <property type="entry name" value="RIBOSOMAL PROTEIN L17"/>
    <property type="match status" value="1"/>
</dbReference>
<dbReference type="Pfam" id="PF01196">
    <property type="entry name" value="Ribosomal_L17"/>
    <property type="match status" value="1"/>
</dbReference>
<dbReference type="SUPFAM" id="SSF64263">
    <property type="entry name" value="Prokaryotic ribosomal protein L17"/>
    <property type="match status" value="1"/>
</dbReference>